<name>PSTB1_LACJO</name>
<reference key="1">
    <citation type="journal article" date="2004" name="Proc. Natl. Acad. Sci. U.S.A.">
        <title>The genome sequence of the probiotic intestinal bacterium Lactobacillus johnsonii NCC 533.</title>
        <authorList>
            <person name="Pridmore R.D."/>
            <person name="Berger B."/>
            <person name="Desiere F."/>
            <person name="Vilanova D."/>
            <person name="Barretto C."/>
            <person name="Pittet A.-C."/>
            <person name="Zwahlen M.-C."/>
            <person name="Rouvet M."/>
            <person name="Altermann E."/>
            <person name="Barrangou R."/>
            <person name="Mollet B."/>
            <person name="Mercenier A."/>
            <person name="Klaenhammer T."/>
            <person name="Arigoni F."/>
            <person name="Schell M.A."/>
        </authorList>
    </citation>
    <scope>NUCLEOTIDE SEQUENCE [LARGE SCALE GENOMIC DNA]</scope>
    <source>
        <strain>CNCM I-1225 / La1 / NCC 533</strain>
    </source>
</reference>
<protein>
    <recommendedName>
        <fullName evidence="1">Phosphate import ATP-binding protein PstB 1</fullName>
        <ecNumber evidence="1">7.3.2.1</ecNumber>
    </recommendedName>
    <alternativeName>
        <fullName evidence="1">ABC phosphate transporter 1</fullName>
    </alternativeName>
    <alternativeName>
        <fullName evidence="1">Phosphate-transporting ATPase 1</fullName>
    </alternativeName>
</protein>
<sequence length="266" mass="30045">MQNVNEAPTYIHQFDKDEQIISTQDLSVFYGGSVQKLFNASLQFKKKTITALIGGSGSGKSTFLRCLNRMNDKVARVDGEIWYHGLDINKNNINVYQLRKNIGMVFQKPNPFPKSIRENITYALKANGENDKQKLDQIVEESLRAAALWDEVKDKLDKSALAMSGGQQQRLCIARALALKPEILLLDEPASALDPVSTSKLEDTLKQLRTDYTMIMVTHNMQQASRISDYTAFFHLGHVLEYDTTENIFTNPKGEITEDYIRGSFG</sequence>
<gene>
    <name evidence="1" type="primary">pstB1</name>
    <name type="ordered locus">LJ_0792</name>
</gene>
<proteinExistence type="inferred from homology"/>
<dbReference type="EC" id="7.3.2.1" evidence="1"/>
<dbReference type="EMBL" id="AE017198">
    <property type="protein sequence ID" value="AAS08613.1"/>
    <property type="molecule type" value="Genomic_DNA"/>
</dbReference>
<dbReference type="SMR" id="Q74KF9"/>
<dbReference type="KEGG" id="ljo:LJ_0792"/>
<dbReference type="eggNOG" id="COG1117">
    <property type="taxonomic scope" value="Bacteria"/>
</dbReference>
<dbReference type="HOGENOM" id="CLU_000604_1_22_9"/>
<dbReference type="Proteomes" id="UP000000581">
    <property type="component" value="Chromosome"/>
</dbReference>
<dbReference type="GO" id="GO:0005886">
    <property type="term" value="C:plasma membrane"/>
    <property type="evidence" value="ECO:0007669"/>
    <property type="project" value="UniProtKB-SubCell"/>
</dbReference>
<dbReference type="GO" id="GO:0005524">
    <property type="term" value="F:ATP binding"/>
    <property type="evidence" value="ECO:0007669"/>
    <property type="project" value="UniProtKB-KW"/>
</dbReference>
<dbReference type="GO" id="GO:0016887">
    <property type="term" value="F:ATP hydrolysis activity"/>
    <property type="evidence" value="ECO:0007669"/>
    <property type="project" value="InterPro"/>
</dbReference>
<dbReference type="GO" id="GO:0015415">
    <property type="term" value="F:ATPase-coupled phosphate ion transmembrane transporter activity"/>
    <property type="evidence" value="ECO:0007669"/>
    <property type="project" value="UniProtKB-EC"/>
</dbReference>
<dbReference type="GO" id="GO:0035435">
    <property type="term" value="P:phosphate ion transmembrane transport"/>
    <property type="evidence" value="ECO:0007669"/>
    <property type="project" value="InterPro"/>
</dbReference>
<dbReference type="CDD" id="cd03260">
    <property type="entry name" value="ABC_PstB_phosphate_transporter"/>
    <property type="match status" value="1"/>
</dbReference>
<dbReference type="Gene3D" id="3.40.50.300">
    <property type="entry name" value="P-loop containing nucleotide triphosphate hydrolases"/>
    <property type="match status" value="1"/>
</dbReference>
<dbReference type="InterPro" id="IPR003593">
    <property type="entry name" value="AAA+_ATPase"/>
</dbReference>
<dbReference type="InterPro" id="IPR003439">
    <property type="entry name" value="ABC_transporter-like_ATP-bd"/>
</dbReference>
<dbReference type="InterPro" id="IPR017871">
    <property type="entry name" value="ABC_transporter-like_CS"/>
</dbReference>
<dbReference type="InterPro" id="IPR027417">
    <property type="entry name" value="P-loop_NTPase"/>
</dbReference>
<dbReference type="InterPro" id="IPR005670">
    <property type="entry name" value="PstB-like"/>
</dbReference>
<dbReference type="NCBIfam" id="TIGR00972">
    <property type="entry name" value="3a0107s01c2"/>
    <property type="match status" value="1"/>
</dbReference>
<dbReference type="PANTHER" id="PTHR43423">
    <property type="entry name" value="ABC TRANSPORTER I FAMILY MEMBER 17"/>
    <property type="match status" value="1"/>
</dbReference>
<dbReference type="PANTHER" id="PTHR43423:SF10">
    <property type="entry name" value="PHOSPHATE IMPORT ATP-BINDING PROTEIN PSTB 2"/>
    <property type="match status" value="1"/>
</dbReference>
<dbReference type="Pfam" id="PF00005">
    <property type="entry name" value="ABC_tran"/>
    <property type="match status" value="1"/>
</dbReference>
<dbReference type="SMART" id="SM00382">
    <property type="entry name" value="AAA"/>
    <property type="match status" value="1"/>
</dbReference>
<dbReference type="SUPFAM" id="SSF52540">
    <property type="entry name" value="P-loop containing nucleoside triphosphate hydrolases"/>
    <property type="match status" value="1"/>
</dbReference>
<dbReference type="PROSITE" id="PS00211">
    <property type="entry name" value="ABC_TRANSPORTER_1"/>
    <property type="match status" value="1"/>
</dbReference>
<dbReference type="PROSITE" id="PS50893">
    <property type="entry name" value="ABC_TRANSPORTER_2"/>
    <property type="match status" value="1"/>
</dbReference>
<dbReference type="PROSITE" id="PS51238">
    <property type="entry name" value="PSTB"/>
    <property type="match status" value="1"/>
</dbReference>
<accession>Q74KF9</accession>
<feature type="chain" id="PRO_0000272467" description="Phosphate import ATP-binding protein PstB 1">
    <location>
        <begin position="1"/>
        <end position="266"/>
    </location>
</feature>
<feature type="domain" description="ABC transporter" evidence="1">
    <location>
        <begin position="21"/>
        <end position="261"/>
    </location>
</feature>
<feature type="binding site" evidence="1">
    <location>
        <begin position="54"/>
        <end position="61"/>
    </location>
    <ligand>
        <name>ATP</name>
        <dbReference type="ChEBI" id="CHEBI:30616"/>
    </ligand>
</feature>
<evidence type="ECO:0000255" key="1">
    <source>
        <dbReference type="HAMAP-Rule" id="MF_01702"/>
    </source>
</evidence>
<keyword id="KW-0067">ATP-binding</keyword>
<keyword id="KW-1003">Cell membrane</keyword>
<keyword id="KW-0472">Membrane</keyword>
<keyword id="KW-0547">Nucleotide-binding</keyword>
<keyword id="KW-0592">Phosphate transport</keyword>
<keyword id="KW-1278">Translocase</keyword>
<keyword id="KW-0813">Transport</keyword>
<organism>
    <name type="scientific">Lactobacillus johnsonii (strain CNCM I-12250 / La1 / NCC 533)</name>
    <dbReference type="NCBI Taxonomy" id="257314"/>
    <lineage>
        <taxon>Bacteria</taxon>
        <taxon>Bacillati</taxon>
        <taxon>Bacillota</taxon>
        <taxon>Bacilli</taxon>
        <taxon>Lactobacillales</taxon>
        <taxon>Lactobacillaceae</taxon>
        <taxon>Lactobacillus</taxon>
    </lineage>
</organism>
<comment type="function">
    <text evidence="1">Part of the ABC transporter complex PstSACB involved in phosphate import. Responsible for energy coupling to the transport system.</text>
</comment>
<comment type="catalytic activity">
    <reaction evidence="1">
        <text>phosphate(out) + ATP + H2O = ADP + 2 phosphate(in) + H(+)</text>
        <dbReference type="Rhea" id="RHEA:24440"/>
        <dbReference type="ChEBI" id="CHEBI:15377"/>
        <dbReference type="ChEBI" id="CHEBI:15378"/>
        <dbReference type="ChEBI" id="CHEBI:30616"/>
        <dbReference type="ChEBI" id="CHEBI:43474"/>
        <dbReference type="ChEBI" id="CHEBI:456216"/>
        <dbReference type="EC" id="7.3.2.1"/>
    </reaction>
</comment>
<comment type="subunit">
    <text evidence="1">The complex is composed of two ATP-binding proteins (PstB), two transmembrane proteins (PstC and PstA) and a solute-binding protein (PstS).</text>
</comment>
<comment type="subcellular location">
    <subcellularLocation>
        <location evidence="1">Cell membrane</location>
        <topology evidence="1">Peripheral membrane protein</topology>
    </subcellularLocation>
</comment>
<comment type="similarity">
    <text evidence="1">Belongs to the ABC transporter superfamily. Phosphate importer (TC 3.A.1.7) family.</text>
</comment>